<reference key="1">
    <citation type="journal article" date="2001" name="Biochim. Biophys. Acta">
        <title>Molecular cloning of PalBH, a mammalian homologue of the Aspergillus atypical calpain PalB.</title>
        <authorList>
            <person name="Futai E."/>
            <person name="Kubo T."/>
            <person name="Sorimachi H."/>
            <person name="Suzuki K."/>
            <person name="Maeda T."/>
        </authorList>
    </citation>
    <scope>NUCLEOTIDE SEQUENCE [MRNA]</scope>
</reference>
<reference key="2">
    <citation type="journal article" date="2009" name="Sci. Signal.">
        <title>Quantitative phosphoproteomic analysis of T cell receptor signaling reveals system-wide modulation of protein-protein interactions.</title>
        <authorList>
            <person name="Mayya V."/>
            <person name="Lundgren D.H."/>
            <person name="Hwang S.-I."/>
            <person name="Rezaul K."/>
            <person name="Wu L."/>
            <person name="Eng J.K."/>
            <person name="Rodionov V."/>
            <person name="Han D.K."/>
        </authorList>
    </citation>
    <scope>PHOSPHORYLATION [LARGE SCALE ANALYSIS] AT THR-95</scope>
    <scope>IDENTIFICATION BY MASS SPECTROMETRY [LARGE SCALE ANALYSIS]</scope>
    <source>
        <tissue>Leukemic T-cell</tissue>
    </source>
</reference>
<reference key="3">
    <citation type="journal article" date="2012" name="Proc. Natl. Acad. Sci. U.S.A.">
        <title>N-terminal acetylome analyses and functional insights of the N-terminal acetyltransferase NatB.</title>
        <authorList>
            <person name="Van Damme P."/>
            <person name="Lasa M."/>
            <person name="Polevoda B."/>
            <person name="Gazquez C."/>
            <person name="Elosegui-Artola A."/>
            <person name="Kim D.S."/>
            <person name="De Juan-Pardo E."/>
            <person name="Demeyer K."/>
            <person name="Hole K."/>
            <person name="Larrea E."/>
            <person name="Timmerman E."/>
            <person name="Prieto J."/>
            <person name="Arnesen T."/>
            <person name="Sherman F."/>
            <person name="Gevaert K."/>
            <person name="Aldabe R."/>
        </authorList>
    </citation>
    <scope>ACETYLATION [LARGE SCALE ANALYSIS] AT MET-1</scope>
    <scope>IDENTIFICATION BY MASS SPECTROMETRY [LARGE SCALE ANALYSIS]</scope>
</reference>
<keyword id="KW-0002">3D-structure</keyword>
<keyword id="KW-0007">Acetylation</keyword>
<keyword id="KW-0378">Hydrolase</keyword>
<keyword id="KW-0539">Nucleus</keyword>
<keyword id="KW-0597">Phosphoprotein</keyword>
<keyword id="KW-0645">Protease</keyword>
<keyword id="KW-1267">Proteomics identification</keyword>
<keyword id="KW-1185">Reference proteome</keyword>
<keyword id="KW-0677">Repeat</keyword>
<keyword id="KW-0788">Thiol protease</keyword>
<feature type="chain" id="PRO_0000207720" description="Calpain-7">
    <location>
        <begin position="1"/>
        <end position="813"/>
    </location>
</feature>
<feature type="domain" description="Calpain catalytic" evidence="2">
    <location>
        <begin position="232"/>
        <end position="540"/>
    </location>
</feature>
<feature type="region of interest" description="Domain III">
    <location>
        <begin position="541"/>
        <end position="701"/>
    </location>
</feature>
<feature type="region of interest" description="Domain N">
    <location>
        <begin position="702"/>
        <end position="813"/>
    </location>
</feature>
<feature type="active site" evidence="2">
    <location>
        <position position="290"/>
    </location>
</feature>
<feature type="active site" evidence="2">
    <location>
        <position position="458"/>
    </location>
</feature>
<feature type="active site" evidence="2">
    <location>
        <position position="478"/>
    </location>
</feature>
<feature type="modified residue" description="N-acetylmethionine" evidence="5">
    <location>
        <position position="1"/>
    </location>
</feature>
<feature type="modified residue" description="Phosphothreonine" evidence="4">
    <location>
        <position position="95"/>
    </location>
</feature>
<feature type="helix" evidence="7">
    <location>
        <begin position="3"/>
        <end position="22"/>
    </location>
</feature>
<feature type="helix" evidence="7">
    <location>
        <begin position="26"/>
        <end position="45"/>
    </location>
</feature>
<feature type="helix" evidence="7">
    <location>
        <begin position="53"/>
        <end position="68"/>
    </location>
</feature>
<feature type="helix" evidence="7">
    <location>
        <begin position="78"/>
        <end position="102"/>
    </location>
</feature>
<feature type="helix" evidence="7">
    <location>
        <begin position="106"/>
        <end position="124"/>
    </location>
</feature>
<feature type="helix" evidence="7">
    <location>
        <begin position="130"/>
        <end position="151"/>
    </location>
</feature>
<feature type="strand" evidence="6">
    <location>
        <begin position="688"/>
        <end position="696"/>
    </location>
</feature>
<feature type="helix" evidence="6">
    <location>
        <begin position="698"/>
        <end position="700"/>
    </location>
</feature>
<feature type="turn" evidence="6">
    <location>
        <begin position="708"/>
        <end position="710"/>
    </location>
</feature>
<feature type="helix" evidence="6">
    <location>
        <begin position="711"/>
        <end position="713"/>
    </location>
</feature>
<feature type="strand" evidence="6">
    <location>
        <begin position="717"/>
        <end position="723"/>
    </location>
</feature>
<feature type="strand" evidence="6">
    <location>
        <begin position="725"/>
        <end position="732"/>
    </location>
</feature>
<feature type="strand" evidence="6">
    <location>
        <begin position="737"/>
        <end position="747"/>
    </location>
</feature>
<feature type="strand" evidence="6">
    <location>
        <begin position="758"/>
        <end position="761"/>
    </location>
</feature>
<feature type="strand" evidence="6">
    <location>
        <begin position="766"/>
        <end position="777"/>
    </location>
</feature>
<feature type="strand" evidence="6">
    <location>
        <begin position="779"/>
        <end position="790"/>
    </location>
</feature>
<feature type="strand" evidence="6">
    <location>
        <begin position="795"/>
        <end position="805"/>
    </location>
</feature>
<feature type="strand" evidence="6">
    <location>
        <begin position="808"/>
        <end position="811"/>
    </location>
</feature>
<dbReference type="EC" id="3.4.22.-"/>
<dbReference type="EMBL" id="AB028639">
    <property type="protein sequence ID" value="BAA78730.1"/>
    <property type="molecule type" value="mRNA"/>
</dbReference>
<dbReference type="CCDS" id="CCDS2624.1"/>
<dbReference type="RefSeq" id="NP_055111.1">
    <property type="nucleotide sequence ID" value="NM_014296.3"/>
</dbReference>
<dbReference type="PDB" id="2QFE">
    <property type="method" value="X-ray"/>
    <property type="resolution" value="1.45 A"/>
    <property type="chains" value="A=684-813"/>
</dbReference>
<dbReference type="PDB" id="8UC6">
    <property type="method" value="X-ray"/>
    <property type="resolution" value="2.70 A"/>
    <property type="chains" value="B/C=1-165"/>
</dbReference>
<dbReference type="PDBsum" id="2QFE"/>
<dbReference type="PDBsum" id="8UC6"/>
<dbReference type="SMR" id="Q9Y6W3"/>
<dbReference type="BioGRID" id="117033">
    <property type="interactions" value="45"/>
</dbReference>
<dbReference type="CORUM" id="Q9Y6W3"/>
<dbReference type="FunCoup" id="Q9Y6W3">
    <property type="interactions" value="2245"/>
</dbReference>
<dbReference type="IntAct" id="Q9Y6W3">
    <property type="interactions" value="29"/>
</dbReference>
<dbReference type="MINT" id="Q9Y6W3"/>
<dbReference type="STRING" id="9606.ENSP00000253693"/>
<dbReference type="MEROPS" id="C02.029"/>
<dbReference type="GlyCosmos" id="Q9Y6W3">
    <property type="glycosylation" value="1 site, 1 glycan"/>
</dbReference>
<dbReference type="GlyGen" id="Q9Y6W3">
    <property type="glycosylation" value="1 site, 1 O-linked glycan (1 site)"/>
</dbReference>
<dbReference type="iPTMnet" id="Q9Y6W3"/>
<dbReference type="PhosphoSitePlus" id="Q9Y6W3"/>
<dbReference type="BioMuta" id="CAPN7"/>
<dbReference type="DMDM" id="33112239"/>
<dbReference type="jPOST" id="Q9Y6W3"/>
<dbReference type="MassIVE" id="Q9Y6W3"/>
<dbReference type="PaxDb" id="9606-ENSP00000253693"/>
<dbReference type="PeptideAtlas" id="Q9Y6W3"/>
<dbReference type="ProteomicsDB" id="86800"/>
<dbReference type="Pumba" id="Q9Y6W3"/>
<dbReference type="Antibodypedia" id="11065">
    <property type="antibodies" value="106 antibodies from 23 providers"/>
</dbReference>
<dbReference type="DNASU" id="23473"/>
<dbReference type="Ensembl" id="ENST00000253693.7">
    <property type="protein sequence ID" value="ENSP00000253693.2"/>
    <property type="gene ID" value="ENSG00000131375.10"/>
</dbReference>
<dbReference type="GeneID" id="23473"/>
<dbReference type="KEGG" id="hsa:23473"/>
<dbReference type="MANE-Select" id="ENST00000253693.7">
    <property type="protein sequence ID" value="ENSP00000253693.2"/>
    <property type="RefSeq nucleotide sequence ID" value="NM_014296.3"/>
    <property type="RefSeq protein sequence ID" value="NP_055111.1"/>
</dbReference>
<dbReference type="UCSC" id="uc003bzn.4">
    <property type="organism name" value="human"/>
</dbReference>
<dbReference type="AGR" id="HGNC:1484"/>
<dbReference type="CTD" id="23473"/>
<dbReference type="DisGeNET" id="23473"/>
<dbReference type="GeneCards" id="CAPN7"/>
<dbReference type="HGNC" id="HGNC:1484">
    <property type="gene designation" value="CAPN7"/>
</dbReference>
<dbReference type="HPA" id="ENSG00000131375">
    <property type="expression patterns" value="Low tissue specificity"/>
</dbReference>
<dbReference type="MIM" id="606400">
    <property type="type" value="gene"/>
</dbReference>
<dbReference type="neXtProt" id="NX_Q9Y6W3"/>
<dbReference type="OpenTargets" id="ENSG00000131375"/>
<dbReference type="PharmGKB" id="PA26064"/>
<dbReference type="VEuPathDB" id="HostDB:ENSG00000131375"/>
<dbReference type="eggNOG" id="KOG0045">
    <property type="taxonomic scope" value="Eukaryota"/>
</dbReference>
<dbReference type="GeneTree" id="ENSGT00940000155892"/>
<dbReference type="HOGENOM" id="CLU_006770_2_0_1"/>
<dbReference type="InParanoid" id="Q9Y6W3"/>
<dbReference type="OMA" id="GDYRRGC"/>
<dbReference type="OrthoDB" id="167576at2759"/>
<dbReference type="PAN-GO" id="Q9Y6W3">
    <property type="GO annotations" value="2 GO annotations based on evolutionary models"/>
</dbReference>
<dbReference type="PhylomeDB" id="Q9Y6W3"/>
<dbReference type="TreeFam" id="TF322245"/>
<dbReference type="BRENDA" id="3.4.22.B27">
    <property type="organism ID" value="2681"/>
</dbReference>
<dbReference type="PathwayCommons" id="Q9Y6W3"/>
<dbReference type="Reactome" id="R-HSA-1474228">
    <property type="pathway name" value="Degradation of the extracellular matrix"/>
</dbReference>
<dbReference type="SignaLink" id="Q9Y6W3"/>
<dbReference type="BioGRID-ORCS" id="23473">
    <property type="hits" value="7 hits in 1155 CRISPR screens"/>
</dbReference>
<dbReference type="ChiTaRS" id="CAPN7">
    <property type="organism name" value="human"/>
</dbReference>
<dbReference type="EvolutionaryTrace" id="Q9Y6W3"/>
<dbReference type="GenomeRNAi" id="23473"/>
<dbReference type="Pharos" id="Q9Y6W3">
    <property type="development level" value="Tbio"/>
</dbReference>
<dbReference type="PRO" id="PR:Q9Y6W3"/>
<dbReference type="Proteomes" id="UP000005640">
    <property type="component" value="Chromosome 3"/>
</dbReference>
<dbReference type="RNAct" id="Q9Y6W3">
    <property type="molecule type" value="protein"/>
</dbReference>
<dbReference type="Bgee" id="ENSG00000131375">
    <property type="expression patterns" value="Expressed in secondary oocyte and 199 other cell types or tissues"/>
</dbReference>
<dbReference type="ExpressionAtlas" id="Q9Y6W3">
    <property type="expression patterns" value="baseline and differential"/>
</dbReference>
<dbReference type="GO" id="GO:0005813">
    <property type="term" value="C:centrosome"/>
    <property type="evidence" value="ECO:0000314"/>
    <property type="project" value="HPA"/>
</dbReference>
<dbReference type="GO" id="GO:0005829">
    <property type="term" value="C:cytosol"/>
    <property type="evidence" value="ECO:0000314"/>
    <property type="project" value="HPA"/>
</dbReference>
<dbReference type="GO" id="GO:0070062">
    <property type="term" value="C:extracellular exosome"/>
    <property type="evidence" value="ECO:0007005"/>
    <property type="project" value="UniProtKB"/>
</dbReference>
<dbReference type="GO" id="GO:0005634">
    <property type="term" value="C:nucleus"/>
    <property type="evidence" value="ECO:0007669"/>
    <property type="project" value="UniProtKB-SubCell"/>
</dbReference>
<dbReference type="GO" id="GO:0004198">
    <property type="term" value="F:calcium-dependent cysteine-type endopeptidase activity"/>
    <property type="evidence" value="ECO:0007669"/>
    <property type="project" value="InterPro"/>
</dbReference>
<dbReference type="GO" id="GO:0004197">
    <property type="term" value="F:cysteine-type endopeptidase activity"/>
    <property type="evidence" value="ECO:0000318"/>
    <property type="project" value="GO_Central"/>
</dbReference>
<dbReference type="GO" id="GO:0004175">
    <property type="term" value="F:endopeptidase activity"/>
    <property type="evidence" value="ECO:0000314"/>
    <property type="project" value="UniProtKB"/>
</dbReference>
<dbReference type="GO" id="GO:0090541">
    <property type="term" value="F:MIT domain binding"/>
    <property type="evidence" value="ECO:0000353"/>
    <property type="project" value="UniProtKB"/>
</dbReference>
<dbReference type="GO" id="GO:0010634">
    <property type="term" value="P:positive regulation of epithelial cell migration"/>
    <property type="evidence" value="ECO:0000314"/>
    <property type="project" value="UniProtKB"/>
</dbReference>
<dbReference type="GO" id="GO:0006508">
    <property type="term" value="P:proteolysis"/>
    <property type="evidence" value="ECO:0000318"/>
    <property type="project" value="GO_Central"/>
</dbReference>
<dbReference type="GO" id="GO:0097264">
    <property type="term" value="P:self proteolysis"/>
    <property type="evidence" value="ECO:0000314"/>
    <property type="project" value="UniProtKB"/>
</dbReference>
<dbReference type="CDD" id="cd00044">
    <property type="entry name" value="CysPc"/>
    <property type="match status" value="1"/>
</dbReference>
<dbReference type="CDD" id="cd02681">
    <property type="entry name" value="MIT_calpain7_1"/>
    <property type="match status" value="1"/>
</dbReference>
<dbReference type="FunFam" id="1.20.58.80:FF:000016">
    <property type="entry name" value="Calpain 7"/>
    <property type="match status" value="1"/>
</dbReference>
<dbReference type="FunFam" id="2.60.120.380:FF:000007">
    <property type="entry name" value="Calpain 7"/>
    <property type="match status" value="1"/>
</dbReference>
<dbReference type="FunFam" id="2.60.120.380:FF:000008">
    <property type="entry name" value="Calpain 7"/>
    <property type="match status" value="1"/>
</dbReference>
<dbReference type="FunFam" id="3.90.70.10:FF:000069">
    <property type="entry name" value="Calpain 7"/>
    <property type="match status" value="1"/>
</dbReference>
<dbReference type="Gene3D" id="2.60.120.380">
    <property type="match status" value="2"/>
</dbReference>
<dbReference type="Gene3D" id="3.90.70.10">
    <property type="entry name" value="Cysteine proteinases"/>
    <property type="match status" value="1"/>
</dbReference>
<dbReference type="Gene3D" id="1.20.58.80">
    <property type="entry name" value="Phosphotransferase system, lactose/cellobiose-type IIA subunit"/>
    <property type="match status" value="2"/>
</dbReference>
<dbReference type="InterPro" id="IPR022684">
    <property type="entry name" value="Calpain_cysteine_protease"/>
</dbReference>
<dbReference type="InterPro" id="IPR022682">
    <property type="entry name" value="Calpain_domain_III"/>
</dbReference>
<dbReference type="InterPro" id="IPR022683">
    <property type="entry name" value="Calpain_III"/>
</dbReference>
<dbReference type="InterPro" id="IPR036213">
    <property type="entry name" value="Calpain_III_sf"/>
</dbReference>
<dbReference type="InterPro" id="IPR007330">
    <property type="entry name" value="MIT_dom"/>
</dbReference>
<dbReference type="InterPro" id="IPR036181">
    <property type="entry name" value="MIT_dom_sf"/>
</dbReference>
<dbReference type="InterPro" id="IPR051297">
    <property type="entry name" value="PalB/RIM13_Calpain-like"/>
</dbReference>
<dbReference type="InterPro" id="IPR038765">
    <property type="entry name" value="Papain-like_cys_pep_sf"/>
</dbReference>
<dbReference type="InterPro" id="IPR001300">
    <property type="entry name" value="Peptidase_C2_calpain_cat"/>
</dbReference>
<dbReference type="PANTHER" id="PTHR46143">
    <property type="entry name" value="CALPAIN-7"/>
    <property type="match status" value="1"/>
</dbReference>
<dbReference type="PANTHER" id="PTHR46143:SF1">
    <property type="entry name" value="CALPAIN-7"/>
    <property type="match status" value="1"/>
</dbReference>
<dbReference type="Pfam" id="PF01067">
    <property type="entry name" value="Calpain_III"/>
    <property type="match status" value="1"/>
</dbReference>
<dbReference type="Pfam" id="PF04212">
    <property type="entry name" value="MIT"/>
    <property type="match status" value="2"/>
</dbReference>
<dbReference type="Pfam" id="PF00648">
    <property type="entry name" value="Peptidase_C2"/>
    <property type="match status" value="1"/>
</dbReference>
<dbReference type="PRINTS" id="PR00704">
    <property type="entry name" value="CALPAIN"/>
</dbReference>
<dbReference type="SMART" id="SM00720">
    <property type="entry name" value="calpain_III"/>
    <property type="match status" value="1"/>
</dbReference>
<dbReference type="SMART" id="SM00230">
    <property type="entry name" value="CysPc"/>
    <property type="match status" value="1"/>
</dbReference>
<dbReference type="SMART" id="SM00745">
    <property type="entry name" value="MIT"/>
    <property type="match status" value="2"/>
</dbReference>
<dbReference type="SUPFAM" id="SSF49758">
    <property type="entry name" value="Calpain large subunit, middle domain (domain III)"/>
    <property type="match status" value="2"/>
</dbReference>
<dbReference type="SUPFAM" id="SSF54001">
    <property type="entry name" value="Cysteine proteinases"/>
    <property type="match status" value="1"/>
</dbReference>
<dbReference type="SUPFAM" id="SSF116846">
    <property type="entry name" value="MIT domain"/>
    <property type="match status" value="2"/>
</dbReference>
<dbReference type="PROSITE" id="PS50203">
    <property type="entry name" value="CALPAIN_CAT"/>
    <property type="match status" value="1"/>
</dbReference>
<gene>
    <name type="primary">CAPN7</name>
    <name type="synonym">PALBH</name>
</gene>
<evidence type="ECO:0000250" key="1"/>
<evidence type="ECO:0000255" key="2">
    <source>
        <dbReference type="PROSITE-ProRule" id="PRU00239"/>
    </source>
</evidence>
<evidence type="ECO:0000305" key="3"/>
<evidence type="ECO:0007744" key="4">
    <source>
    </source>
</evidence>
<evidence type="ECO:0007744" key="5">
    <source>
    </source>
</evidence>
<evidence type="ECO:0007829" key="6">
    <source>
        <dbReference type="PDB" id="2QFE"/>
    </source>
</evidence>
<evidence type="ECO:0007829" key="7">
    <source>
        <dbReference type="PDB" id="8UC6"/>
    </source>
</evidence>
<accession>Q9Y6W3</accession>
<proteinExistence type="evidence at protein level"/>
<comment type="function">
    <text evidence="1">Calcium-regulated non-lysosomal thiol-protease.</text>
</comment>
<comment type="interaction">
    <interactant intactId="EBI-1765641">
        <id>Q9Y6W3</id>
    </interactant>
    <interactant intactId="EBI-765971">
        <id>Q9HBZ2</id>
        <label>ARNT2</label>
    </interactant>
    <organismsDiffer>false</organismsDiffer>
    <experiments>3</experiments>
</comment>
<comment type="interaction">
    <interactant intactId="EBI-1765641">
        <id>Q9Y6W3</id>
    </interactant>
    <interactant intactId="EBI-4400025">
        <id>Q9Y2T1</id>
        <label>AXIN2</label>
    </interactant>
    <organismsDiffer>false</organismsDiffer>
    <experiments>3</experiments>
</comment>
<comment type="interaction">
    <interactant intactId="EBI-1765641">
        <id>Q9Y6W3</id>
    </interactant>
    <interactant intactId="EBI-11522539">
        <id>Q96MT8-3</id>
        <label>CEP63</label>
    </interactant>
    <organismsDiffer>false</organismsDiffer>
    <experiments>3</experiments>
</comment>
<comment type="interaction">
    <interactant intactId="EBI-1765641">
        <id>Q9Y6W3</id>
    </interactant>
    <interactant intactId="EBI-10171902">
        <id>P56545-3</id>
        <label>CTBP2</label>
    </interactant>
    <organismsDiffer>false</organismsDiffer>
    <experiments>3</experiments>
</comment>
<comment type="interaction">
    <interactant intactId="EBI-1765641">
        <id>Q9Y6W3</id>
    </interactant>
    <interactant intactId="EBI-618309">
        <id>Q08379</id>
        <label>GOLGA2</label>
    </interactant>
    <organismsDiffer>false</organismsDiffer>
    <experiments>3</experiments>
</comment>
<comment type="interaction">
    <interactant intactId="EBI-1765641">
        <id>Q9Y6W3</id>
    </interactant>
    <interactant intactId="EBI-347427">
        <id>Q13099</id>
        <label>IFT88</label>
    </interactant>
    <organismsDiffer>false</organismsDiffer>
    <experiments>3</experiments>
</comment>
<comment type="interaction">
    <interactant intactId="EBI-1765641">
        <id>Q9Y6W3</id>
    </interactant>
    <interactant intactId="EBI-945994">
        <id>P53990</id>
        <label>IST1</label>
    </interactant>
    <organismsDiffer>false</organismsDiffer>
    <experiments>6</experiments>
</comment>
<comment type="interaction">
    <interactant intactId="EBI-1765641">
        <id>Q9Y6W3</id>
    </interactant>
    <interactant intactId="EBI-742610">
        <id>Q9Y6D9</id>
        <label>MAD1L1</label>
    </interactant>
    <organismsDiffer>false</organismsDiffer>
    <experiments>3</experiments>
</comment>
<comment type="interaction">
    <interactant intactId="EBI-1765641">
        <id>Q9Y6W3</id>
    </interactant>
    <interactant intactId="EBI-716006">
        <id>Q9Y5V3</id>
        <label>MAGED1</label>
    </interactant>
    <organismsDiffer>false</organismsDiffer>
    <experiments>3</experiments>
</comment>
<comment type="interaction">
    <interactant intactId="EBI-1765641">
        <id>Q9Y6W3</id>
    </interactant>
    <interactant intactId="EBI-1105153">
        <id>Q96KQ4</id>
        <label>PPP1R13B</label>
    </interactant>
    <organismsDiffer>false</organismsDiffer>
    <experiments>3</experiments>
</comment>
<comment type="interaction">
    <interactant intactId="EBI-1765641">
        <id>Q9Y6W3</id>
    </interactant>
    <interactant intactId="EBI-724449">
        <id>Q14558</id>
        <label>PRPSAP1</label>
    </interactant>
    <organismsDiffer>false</organismsDiffer>
    <experiments>3</experiments>
</comment>
<comment type="interaction">
    <interactant intactId="EBI-1765641">
        <id>Q9Y6W3</id>
    </interactant>
    <interactant intactId="EBI-2505861">
        <id>Q13829</id>
        <label>TNFAIP1</label>
    </interactant>
    <organismsDiffer>false</organismsDiffer>
    <experiments>3</experiments>
</comment>
<comment type="interaction">
    <interactant intactId="EBI-1765641">
        <id>Q9Y6W3</id>
    </interactant>
    <interactant intactId="EBI-719493">
        <id>P14373</id>
        <label>TRIM27</label>
    </interactant>
    <organismsDiffer>false</organismsDiffer>
    <experiments>3</experiments>
</comment>
<comment type="interaction">
    <interactant intactId="EBI-1765641">
        <id>Q9Y6W3</id>
    </interactant>
    <interactant intactId="EBI-625509">
        <id>Q8N720</id>
        <label>ZNF655</label>
    </interactant>
    <organismsDiffer>false</organismsDiffer>
    <experiments>3</experiments>
</comment>
<comment type="subcellular location">
    <subcellularLocation>
        <location>Nucleus</location>
    </subcellularLocation>
</comment>
<comment type="tissue specificity">
    <text>Ubiquitous.</text>
</comment>
<comment type="similarity">
    <text evidence="3">Belongs to the peptidase C2 family.</text>
</comment>
<sequence length="813" mass="92652">MDATALERDAVQFARLAVQRDHEGRYSEAVFYYKEAAQALIYAEMAGSSLENIQEKITEYLERVQALHSAVQSKSADPLKSKHQLDLERAHFLVTQAFDEDEKENVEDAIELYTEAVDLCLKTSYETADKVLQNKLKQLARQALDRAEALSEPLTKPVGKISSTSVKPKPPPVRAHFPLGANPFLERPQSFISPQSCDAQGQRYTAEEIEVLRTTSKINGIEYVPFMNVDLRERFAYPMPFCDRWGKLPLSPKQKTTFSKWVRPEDLTNNPTMIYTVSSFSIKQTIVSDCSFVASLAISAAYERRFNKKLITGIIYPQNKDGEPEYNPCGKYMVKLHLNGVPRKVIIDDQLPVDHKGELLCSYSNNKSELWVSLIEKAYMKVMGGYDFPGSNSNIDLHALTGWIPERIAMHSDSQTFSKDNSFRMLYQRFHKGDVLITASTGMMTEAEGEKWGLVPTHAYAVLDIREFKGLRFIQLKNPWSHLRWKGRYSENDVKNWTPELQKYLNFDPRTAQKIDNGIFWISWDDLCQYYDVIYLSWNPGLFKESTCIHSTWDAKQGPVKDAYSLANNPQYKLEVQCPQGGAAVWVLLSRHITDKDDFANNREFITMVVYKTDGKKVYYPADPPPYIDGIRINSPHYLTKIKLTTPGTHTFTLVVSQYEKQNTIHYTVRVYSACSFTFSKIPSPYTLSKRINGKWSGQSAGGCGNFQETHKNNPIYQFHIEKTGPLLIELRGPRQYSVGFEVVTVSTLGDPGPHGFLRKSSGDYRCGFCYLELENIPSGIFNIIPSTFLPKQEGPFFLDFNSIIPIKITQLQ</sequence>
<name>CAN7_HUMAN</name>
<protein>
    <recommendedName>
        <fullName>Calpain-7</fullName>
        <ecNumber>3.4.22.-</ecNumber>
    </recommendedName>
    <alternativeName>
        <fullName>PalB homolog</fullName>
        <shortName>PalBH</shortName>
    </alternativeName>
</protein>
<organism>
    <name type="scientific">Homo sapiens</name>
    <name type="common">Human</name>
    <dbReference type="NCBI Taxonomy" id="9606"/>
    <lineage>
        <taxon>Eukaryota</taxon>
        <taxon>Metazoa</taxon>
        <taxon>Chordata</taxon>
        <taxon>Craniata</taxon>
        <taxon>Vertebrata</taxon>
        <taxon>Euteleostomi</taxon>
        <taxon>Mammalia</taxon>
        <taxon>Eutheria</taxon>
        <taxon>Euarchontoglires</taxon>
        <taxon>Primates</taxon>
        <taxon>Haplorrhini</taxon>
        <taxon>Catarrhini</taxon>
        <taxon>Hominidae</taxon>
        <taxon>Homo</taxon>
    </lineage>
</organism>